<protein>
    <recommendedName>
        <fullName evidence="1">Endonuclease NucS</fullName>
        <ecNumber evidence="1">3.1.-.-</ecNumber>
    </recommendedName>
</protein>
<reference key="1">
    <citation type="journal article" date="2003" name="Nucleic Acids Res.">
        <title>The complete genome sequence and analysis of Corynebacterium diphtheriae NCTC13129.</title>
        <authorList>
            <person name="Cerdeno-Tarraga A.-M."/>
            <person name="Efstratiou A."/>
            <person name="Dover L.G."/>
            <person name="Holden M.T.G."/>
            <person name="Pallen M.J."/>
            <person name="Bentley S.D."/>
            <person name="Besra G.S."/>
            <person name="Churcher C.M."/>
            <person name="James K.D."/>
            <person name="De Zoysa A."/>
            <person name="Chillingworth T."/>
            <person name="Cronin A."/>
            <person name="Dowd L."/>
            <person name="Feltwell T."/>
            <person name="Hamlin N."/>
            <person name="Holroyd S."/>
            <person name="Jagels K."/>
            <person name="Moule S."/>
            <person name="Quail M.A."/>
            <person name="Rabbinowitsch E."/>
            <person name="Rutherford K.M."/>
            <person name="Thomson N.R."/>
            <person name="Unwin L."/>
            <person name="Whitehead S."/>
            <person name="Barrell B.G."/>
            <person name="Parkhill J."/>
        </authorList>
    </citation>
    <scope>NUCLEOTIDE SEQUENCE [LARGE SCALE GENOMIC DNA]</scope>
    <source>
        <strain>ATCC 700971 / NCTC 13129 / Biotype gravis</strain>
    </source>
</reference>
<dbReference type="EC" id="3.1.-.-" evidence="1"/>
<dbReference type="EMBL" id="BX248356">
    <property type="protein sequence ID" value="CAE49575.1"/>
    <property type="molecule type" value="Genomic_DNA"/>
</dbReference>
<dbReference type="RefSeq" id="WP_003851110.1">
    <property type="nucleotide sequence ID" value="NC_002935.2"/>
</dbReference>
<dbReference type="SMR" id="Q6NHS6"/>
<dbReference type="STRING" id="257309.DIP1055"/>
<dbReference type="GeneID" id="29423308"/>
<dbReference type="KEGG" id="cdi:DIP1055"/>
<dbReference type="HOGENOM" id="CLU_069350_0_0_11"/>
<dbReference type="Proteomes" id="UP000002198">
    <property type="component" value="Chromosome"/>
</dbReference>
<dbReference type="GO" id="GO:0005737">
    <property type="term" value="C:cytoplasm"/>
    <property type="evidence" value="ECO:0007669"/>
    <property type="project" value="UniProtKB-SubCell"/>
</dbReference>
<dbReference type="GO" id="GO:0003677">
    <property type="term" value="F:DNA binding"/>
    <property type="evidence" value="ECO:0007669"/>
    <property type="project" value="UniProtKB-KW"/>
</dbReference>
<dbReference type="GO" id="GO:0000014">
    <property type="term" value="F:single-stranded DNA endodeoxyribonuclease activity"/>
    <property type="evidence" value="ECO:0007669"/>
    <property type="project" value="UniProtKB-UniRule"/>
</dbReference>
<dbReference type="CDD" id="cd22341">
    <property type="entry name" value="NucS-like"/>
    <property type="match status" value="1"/>
</dbReference>
<dbReference type="Gene3D" id="2.70.180.20">
    <property type="match status" value="1"/>
</dbReference>
<dbReference type="Gene3D" id="3.40.1350.10">
    <property type="match status" value="1"/>
</dbReference>
<dbReference type="HAMAP" id="MF_00722">
    <property type="entry name" value="NucS"/>
    <property type="match status" value="1"/>
</dbReference>
<dbReference type="InterPro" id="IPR002793">
    <property type="entry name" value="Endonuclease_NucS"/>
</dbReference>
<dbReference type="InterPro" id="IPR048301">
    <property type="entry name" value="NucS_C"/>
</dbReference>
<dbReference type="InterPro" id="IPR048302">
    <property type="entry name" value="NucS_N"/>
</dbReference>
<dbReference type="InterPro" id="IPR049173">
    <property type="entry name" value="NucS_N_sf"/>
</dbReference>
<dbReference type="InterPro" id="IPR011856">
    <property type="entry name" value="tRNA_endonuc-like_dom_sf"/>
</dbReference>
<dbReference type="NCBIfam" id="NF002876">
    <property type="entry name" value="PRK03298.1"/>
    <property type="match status" value="1"/>
</dbReference>
<dbReference type="PANTHER" id="PTHR38814">
    <property type="entry name" value="ENDONUCLEASE NUCS"/>
    <property type="match status" value="1"/>
</dbReference>
<dbReference type="PANTHER" id="PTHR38814:SF1">
    <property type="entry name" value="ENDONUCLEASE NUCS"/>
    <property type="match status" value="1"/>
</dbReference>
<dbReference type="Pfam" id="PF01939">
    <property type="entry name" value="NucS_C"/>
    <property type="match status" value="1"/>
</dbReference>
<dbReference type="Pfam" id="PF21003">
    <property type="entry name" value="NucS_N"/>
    <property type="match status" value="1"/>
</dbReference>
<comment type="function">
    <text evidence="1">Cleaves both 3' and 5' ssDNA extremities of branched DNA structures.</text>
</comment>
<comment type="subcellular location">
    <subcellularLocation>
        <location evidence="1">Cytoplasm</location>
    </subcellularLocation>
</comment>
<comment type="similarity">
    <text evidence="1">Belongs to the NucS endonuclease family.</text>
</comment>
<gene>
    <name evidence="1" type="primary">nucS</name>
    <name type="ordered locus">DIP1055</name>
</gene>
<sequence length="229" mass="25635">MRLVIARCSVDYIGRLEAHLPMADRLLMVKADGSVSIHADDRAYKPLNWMTPPCTLTETTHEESETGESIPLWIVENKKGEQLRITIEALHSDMYYDLGEDPGLQKDGVEAHLQELLAEHIETLGDGYSLVRREYPTPIGPVDILCRDDKGGSVAVEIKRRGGIDGVEQLSRYLELLNRDDLLAPVAGVFAAQHIKPQARTLAEDRGIRCVTLDYDSLRGIESTELRLF</sequence>
<proteinExistence type="inferred from homology"/>
<feature type="chain" id="PRO_1000045827" description="Endonuclease NucS">
    <location>
        <begin position="1"/>
        <end position="229"/>
    </location>
</feature>
<evidence type="ECO:0000255" key="1">
    <source>
        <dbReference type="HAMAP-Rule" id="MF_00722"/>
    </source>
</evidence>
<name>NUCS_CORDI</name>
<accession>Q6NHS6</accession>
<keyword id="KW-0963">Cytoplasm</keyword>
<keyword id="KW-0238">DNA-binding</keyword>
<keyword id="KW-0255">Endonuclease</keyword>
<keyword id="KW-0378">Hydrolase</keyword>
<keyword id="KW-0540">Nuclease</keyword>
<keyword id="KW-1185">Reference proteome</keyword>
<organism>
    <name type="scientific">Corynebacterium diphtheriae (strain ATCC 700971 / NCTC 13129 / Biotype gravis)</name>
    <dbReference type="NCBI Taxonomy" id="257309"/>
    <lineage>
        <taxon>Bacteria</taxon>
        <taxon>Bacillati</taxon>
        <taxon>Actinomycetota</taxon>
        <taxon>Actinomycetes</taxon>
        <taxon>Mycobacteriales</taxon>
        <taxon>Corynebacteriaceae</taxon>
        <taxon>Corynebacterium</taxon>
    </lineage>
</organism>